<accession>Q21H65</accession>
<sequence length="722" mass="77810">MQWGTPSQKDKKVNPVIKKFQYGNDTVTLETGRIARQASGAVLASMGQTSVLVAVTGSKEAKPGQDFFPLSVHYQEKAYAAGKIPGGFFKREARPSEKETLTSRLIDRPIRPLFPNGFLNEVQVVCTVISAEKDVDPDIVAMIGTSAALAISGIPFNGPIGAARVGYTQESGYLLNPTYSTLKTSELDMVVAGTADAVLMVESEAKELPEDIMLGAVLYAHQEMQAVVQAVAELAKDAAKPVWDWKPEEVNAELKAKVEHGFADSVGVAYRITDKQKRYDRLSELRNQAVAELATEESGVSADEVKGLFAKIEKQIVRSRVVAGEPRIDGRDSKTVRPLHVEVGVLPKVHGSALFTRGETQALVVSTLGSARDAQIIDALEGERKDPFMLHYNFPPYSVGECGRMGATGRREIGHGRLARRGIGAVLPKEEDFPYTMRVVSEITESNGSSSMASVCGASLALMDAGVPLKAPVAGIAMGLVKEDNGFAVLTDILGDEDHLGDMDFKVAGTADGVTALQMDIKIEGITEEIMEIALGQAMDARLHILAEMNRVIASPRKELSENAPQFHTMKIDPDKIRDIIGKGGATIRSITEETGASIDIDDNGTIKIYADDGDGMQAAIARIEEITAEAEIGAVYQGKVVRIVDFGAFVNFLPGKDGLVHISQIAHERVQNVSDYLKEGQDIEVKCMDIDQRGRIKLSIKELLPAPEAETAEAPAGEGEE</sequence>
<proteinExistence type="inferred from homology"/>
<dbReference type="EC" id="2.7.7.8" evidence="1"/>
<dbReference type="EMBL" id="CP000282">
    <property type="protein sequence ID" value="ABD81964.1"/>
    <property type="molecule type" value="Genomic_DNA"/>
</dbReference>
<dbReference type="SMR" id="Q21H65"/>
<dbReference type="STRING" id="203122.Sde_2704"/>
<dbReference type="KEGG" id="sde:Sde_2704"/>
<dbReference type="eggNOG" id="COG1185">
    <property type="taxonomic scope" value="Bacteria"/>
</dbReference>
<dbReference type="HOGENOM" id="CLU_004217_2_2_6"/>
<dbReference type="Proteomes" id="UP000001947">
    <property type="component" value="Chromosome"/>
</dbReference>
<dbReference type="GO" id="GO:0005829">
    <property type="term" value="C:cytosol"/>
    <property type="evidence" value="ECO:0007669"/>
    <property type="project" value="TreeGrafter"/>
</dbReference>
<dbReference type="GO" id="GO:0000175">
    <property type="term" value="F:3'-5'-RNA exonuclease activity"/>
    <property type="evidence" value="ECO:0007669"/>
    <property type="project" value="TreeGrafter"/>
</dbReference>
<dbReference type="GO" id="GO:0000287">
    <property type="term" value="F:magnesium ion binding"/>
    <property type="evidence" value="ECO:0007669"/>
    <property type="project" value="UniProtKB-UniRule"/>
</dbReference>
<dbReference type="GO" id="GO:0004654">
    <property type="term" value="F:polyribonucleotide nucleotidyltransferase activity"/>
    <property type="evidence" value="ECO:0007669"/>
    <property type="project" value="UniProtKB-UniRule"/>
</dbReference>
<dbReference type="GO" id="GO:0003723">
    <property type="term" value="F:RNA binding"/>
    <property type="evidence" value="ECO:0007669"/>
    <property type="project" value="UniProtKB-UniRule"/>
</dbReference>
<dbReference type="GO" id="GO:0006402">
    <property type="term" value="P:mRNA catabolic process"/>
    <property type="evidence" value="ECO:0007669"/>
    <property type="project" value="UniProtKB-UniRule"/>
</dbReference>
<dbReference type="GO" id="GO:0006396">
    <property type="term" value="P:RNA processing"/>
    <property type="evidence" value="ECO:0007669"/>
    <property type="project" value="InterPro"/>
</dbReference>
<dbReference type="CDD" id="cd02393">
    <property type="entry name" value="KH-I_PNPase"/>
    <property type="match status" value="1"/>
</dbReference>
<dbReference type="CDD" id="cd11363">
    <property type="entry name" value="RNase_PH_PNPase_1"/>
    <property type="match status" value="1"/>
</dbReference>
<dbReference type="CDD" id="cd11364">
    <property type="entry name" value="RNase_PH_PNPase_2"/>
    <property type="match status" value="1"/>
</dbReference>
<dbReference type="CDD" id="cd04472">
    <property type="entry name" value="S1_PNPase"/>
    <property type="match status" value="1"/>
</dbReference>
<dbReference type="FunFam" id="2.40.50.140:FF:000023">
    <property type="entry name" value="Polyribonucleotide nucleotidyltransferase"/>
    <property type="match status" value="1"/>
</dbReference>
<dbReference type="FunFam" id="3.30.1370.10:FF:000001">
    <property type="entry name" value="Polyribonucleotide nucleotidyltransferase"/>
    <property type="match status" value="1"/>
</dbReference>
<dbReference type="FunFam" id="3.30.230.70:FF:000001">
    <property type="entry name" value="Polyribonucleotide nucleotidyltransferase"/>
    <property type="match status" value="1"/>
</dbReference>
<dbReference type="FunFam" id="3.30.230.70:FF:000002">
    <property type="entry name" value="Polyribonucleotide nucleotidyltransferase"/>
    <property type="match status" value="1"/>
</dbReference>
<dbReference type="Gene3D" id="3.30.230.70">
    <property type="entry name" value="GHMP Kinase, N-terminal domain"/>
    <property type="match status" value="2"/>
</dbReference>
<dbReference type="Gene3D" id="3.30.1370.10">
    <property type="entry name" value="K Homology domain, type 1"/>
    <property type="match status" value="1"/>
</dbReference>
<dbReference type="Gene3D" id="2.40.50.140">
    <property type="entry name" value="Nucleic acid-binding proteins"/>
    <property type="match status" value="1"/>
</dbReference>
<dbReference type="HAMAP" id="MF_01595">
    <property type="entry name" value="PNPase"/>
    <property type="match status" value="1"/>
</dbReference>
<dbReference type="InterPro" id="IPR001247">
    <property type="entry name" value="ExoRNase_PH_dom1"/>
</dbReference>
<dbReference type="InterPro" id="IPR015847">
    <property type="entry name" value="ExoRNase_PH_dom2"/>
</dbReference>
<dbReference type="InterPro" id="IPR036345">
    <property type="entry name" value="ExoRNase_PH_dom2_sf"/>
</dbReference>
<dbReference type="InterPro" id="IPR004087">
    <property type="entry name" value="KH_dom"/>
</dbReference>
<dbReference type="InterPro" id="IPR004088">
    <property type="entry name" value="KH_dom_type_1"/>
</dbReference>
<dbReference type="InterPro" id="IPR036612">
    <property type="entry name" value="KH_dom_type_1_sf"/>
</dbReference>
<dbReference type="InterPro" id="IPR012340">
    <property type="entry name" value="NA-bd_OB-fold"/>
</dbReference>
<dbReference type="InterPro" id="IPR012162">
    <property type="entry name" value="PNPase"/>
</dbReference>
<dbReference type="InterPro" id="IPR027408">
    <property type="entry name" value="PNPase/RNase_PH_dom_sf"/>
</dbReference>
<dbReference type="InterPro" id="IPR015848">
    <property type="entry name" value="PNPase_PH_RNA-bd_bac/org-type"/>
</dbReference>
<dbReference type="InterPro" id="IPR020568">
    <property type="entry name" value="Ribosomal_Su5_D2-typ_SF"/>
</dbReference>
<dbReference type="InterPro" id="IPR003029">
    <property type="entry name" value="S1_domain"/>
</dbReference>
<dbReference type="NCBIfam" id="TIGR03591">
    <property type="entry name" value="polynuc_phos"/>
    <property type="match status" value="1"/>
</dbReference>
<dbReference type="NCBIfam" id="NF008805">
    <property type="entry name" value="PRK11824.1"/>
    <property type="match status" value="1"/>
</dbReference>
<dbReference type="PANTHER" id="PTHR11252">
    <property type="entry name" value="POLYRIBONUCLEOTIDE NUCLEOTIDYLTRANSFERASE"/>
    <property type="match status" value="1"/>
</dbReference>
<dbReference type="PANTHER" id="PTHR11252:SF0">
    <property type="entry name" value="POLYRIBONUCLEOTIDE NUCLEOTIDYLTRANSFERASE 1, MITOCHONDRIAL"/>
    <property type="match status" value="1"/>
</dbReference>
<dbReference type="Pfam" id="PF00013">
    <property type="entry name" value="KH_1"/>
    <property type="match status" value="1"/>
</dbReference>
<dbReference type="Pfam" id="PF03726">
    <property type="entry name" value="PNPase"/>
    <property type="match status" value="1"/>
</dbReference>
<dbReference type="Pfam" id="PF01138">
    <property type="entry name" value="RNase_PH"/>
    <property type="match status" value="2"/>
</dbReference>
<dbReference type="Pfam" id="PF03725">
    <property type="entry name" value="RNase_PH_C"/>
    <property type="match status" value="2"/>
</dbReference>
<dbReference type="Pfam" id="PF00575">
    <property type="entry name" value="S1"/>
    <property type="match status" value="1"/>
</dbReference>
<dbReference type="PIRSF" id="PIRSF005499">
    <property type="entry name" value="PNPase"/>
    <property type="match status" value="1"/>
</dbReference>
<dbReference type="SMART" id="SM00322">
    <property type="entry name" value="KH"/>
    <property type="match status" value="1"/>
</dbReference>
<dbReference type="SMART" id="SM00316">
    <property type="entry name" value="S1"/>
    <property type="match status" value="1"/>
</dbReference>
<dbReference type="SUPFAM" id="SSF54791">
    <property type="entry name" value="Eukaryotic type KH-domain (KH-domain type I)"/>
    <property type="match status" value="1"/>
</dbReference>
<dbReference type="SUPFAM" id="SSF50249">
    <property type="entry name" value="Nucleic acid-binding proteins"/>
    <property type="match status" value="1"/>
</dbReference>
<dbReference type="SUPFAM" id="SSF55666">
    <property type="entry name" value="Ribonuclease PH domain 2-like"/>
    <property type="match status" value="2"/>
</dbReference>
<dbReference type="SUPFAM" id="SSF54211">
    <property type="entry name" value="Ribosomal protein S5 domain 2-like"/>
    <property type="match status" value="2"/>
</dbReference>
<dbReference type="PROSITE" id="PS50084">
    <property type="entry name" value="KH_TYPE_1"/>
    <property type="match status" value="1"/>
</dbReference>
<dbReference type="PROSITE" id="PS50126">
    <property type="entry name" value="S1"/>
    <property type="match status" value="1"/>
</dbReference>
<comment type="function">
    <text evidence="1">Involved in mRNA degradation. Catalyzes the phosphorolysis of single-stranded polyribonucleotides processively in the 3'- to 5'-direction.</text>
</comment>
<comment type="catalytic activity">
    <reaction evidence="1">
        <text>RNA(n+1) + phosphate = RNA(n) + a ribonucleoside 5'-diphosphate</text>
        <dbReference type="Rhea" id="RHEA:22096"/>
        <dbReference type="Rhea" id="RHEA-COMP:14527"/>
        <dbReference type="Rhea" id="RHEA-COMP:17342"/>
        <dbReference type="ChEBI" id="CHEBI:43474"/>
        <dbReference type="ChEBI" id="CHEBI:57930"/>
        <dbReference type="ChEBI" id="CHEBI:140395"/>
        <dbReference type="EC" id="2.7.7.8"/>
    </reaction>
</comment>
<comment type="cofactor">
    <cofactor evidence="1">
        <name>Mg(2+)</name>
        <dbReference type="ChEBI" id="CHEBI:18420"/>
    </cofactor>
</comment>
<comment type="subunit">
    <text evidence="1">Component of the RNA degradosome, which is a multiprotein complex involved in RNA processing and mRNA degradation.</text>
</comment>
<comment type="subcellular location">
    <subcellularLocation>
        <location evidence="1">Cytoplasm</location>
    </subcellularLocation>
</comment>
<comment type="similarity">
    <text evidence="1">Belongs to the polyribonucleotide nucleotidyltransferase family.</text>
</comment>
<keyword id="KW-0963">Cytoplasm</keyword>
<keyword id="KW-0460">Magnesium</keyword>
<keyword id="KW-0479">Metal-binding</keyword>
<keyword id="KW-0548">Nucleotidyltransferase</keyword>
<keyword id="KW-1185">Reference proteome</keyword>
<keyword id="KW-0694">RNA-binding</keyword>
<keyword id="KW-0808">Transferase</keyword>
<feature type="chain" id="PRO_0000329824" description="Polyribonucleotide nucleotidyltransferase">
    <location>
        <begin position="1"/>
        <end position="722"/>
    </location>
</feature>
<feature type="domain" description="KH" evidence="1">
    <location>
        <begin position="565"/>
        <end position="624"/>
    </location>
</feature>
<feature type="domain" description="S1 motif" evidence="1">
    <location>
        <begin position="634"/>
        <end position="702"/>
    </location>
</feature>
<feature type="binding site" evidence="1">
    <location>
        <position position="498"/>
    </location>
    <ligand>
        <name>Mg(2+)</name>
        <dbReference type="ChEBI" id="CHEBI:18420"/>
    </ligand>
</feature>
<feature type="binding site" evidence="1">
    <location>
        <position position="504"/>
    </location>
    <ligand>
        <name>Mg(2+)</name>
        <dbReference type="ChEBI" id="CHEBI:18420"/>
    </ligand>
</feature>
<gene>
    <name evidence="1" type="primary">pnp</name>
    <name type="ordered locus">Sde_2704</name>
</gene>
<protein>
    <recommendedName>
        <fullName evidence="1">Polyribonucleotide nucleotidyltransferase</fullName>
        <ecNumber evidence="1">2.7.7.8</ecNumber>
    </recommendedName>
    <alternativeName>
        <fullName evidence="1">Polynucleotide phosphorylase</fullName>
        <shortName evidence="1">PNPase</shortName>
    </alternativeName>
</protein>
<organism>
    <name type="scientific">Saccharophagus degradans (strain 2-40 / ATCC 43961 / DSM 17024)</name>
    <dbReference type="NCBI Taxonomy" id="203122"/>
    <lineage>
        <taxon>Bacteria</taxon>
        <taxon>Pseudomonadati</taxon>
        <taxon>Pseudomonadota</taxon>
        <taxon>Gammaproteobacteria</taxon>
        <taxon>Cellvibrionales</taxon>
        <taxon>Cellvibrionaceae</taxon>
        <taxon>Saccharophagus</taxon>
    </lineage>
</organism>
<name>PNP_SACD2</name>
<evidence type="ECO:0000255" key="1">
    <source>
        <dbReference type="HAMAP-Rule" id="MF_01595"/>
    </source>
</evidence>
<reference key="1">
    <citation type="journal article" date="2008" name="PLoS Genet.">
        <title>Complete genome sequence of the complex carbohydrate-degrading marine bacterium, Saccharophagus degradans strain 2-40 T.</title>
        <authorList>
            <person name="Weiner R.M."/>
            <person name="Taylor L.E. II"/>
            <person name="Henrissat B."/>
            <person name="Hauser L."/>
            <person name="Land M."/>
            <person name="Coutinho P.M."/>
            <person name="Rancurel C."/>
            <person name="Saunders E.H."/>
            <person name="Longmire A.G."/>
            <person name="Zhang H."/>
            <person name="Bayer E.A."/>
            <person name="Gilbert H.J."/>
            <person name="Larimer F."/>
            <person name="Zhulin I.B."/>
            <person name="Ekborg N.A."/>
            <person name="Lamed R."/>
            <person name="Richardson P.M."/>
            <person name="Borovok I."/>
            <person name="Hutcheson S."/>
        </authorList>
    </citation>
    <scope>NUCLEOTIDE SEQUENCE [LARGE SCALE GENOMIC DNA]</scope>
    <source>
        <strain>2-40 / ATCC 43961 / DSM 17024</strain>
    </source>
</reference>